<organism>
    <name type="scientific">Canine distemper virus (strain Onderstepoort)</name>
    <name type="common">CDV</name>
    <dbReference type="NCBI Taxonomy" id="11233"/>
    <lineage>
        <taxon>Viruses</taxon>
        <taxon>Riboviria</taxon>
        <taxon>Orthornavirae</taxon>
        <taxon>Negarnaviricota</taxon>
        <taxon>Haploviricotina</taxon>
        <taxon>Monjiviricetes</taxon>
        <taxon>Mononegavirales</taxon>
        <taxon>Paramyxoviridae</taxon>
        <taxon>Orthoparamyxovirinae</taxon>
        <taxon>Morbillivirus</taxon>
        <taxon>Morbillivirus canis</taxon>
    </lineage>
</organism>
<evidence type="ECO:0000305" key="1"/>
<name>C_CDVO</name>
<protein>
    <recommendedName>
        <fullName>Protein C</fullName>
    </recommendedName>
</protein>
<reference key="1">
    <citation type="journal article" date="1985" name="Virus Res.">
        <title>Nucleotide sequence of the entire protein coding region of canine distemper virus polymerase-associated (P) protein mRNA.</title>
        <authorList>
            <person name="Barrett T."/>
            <person name="Shrimpton S.B."/>
            <person name="Russell S.E.H."/>
        </authorList>
    </citation>
    <scope>NUCLEOTIDE SEQUENCE [GENOMIC RNA]</scope>
</reference>
<comment type="similarity">
    <text evidence="1">Belongs to the morbillivirus protein C family.</text>
</comment>
<accession>P06941</accession>
<organismHost>
    <name type="scientific">Ailuropoda melanoleuca</name>
    <name type="common">Giant panda</name>
    <dbReference type="NCBI Taxonomy" id="9646"/>
</organismHost>
<organismHost>
    <name type="scientific">Ailurus fulgens</name>
    <name type="common">Himalayan red panda</name>
    <dbReference type="NCBI Taxonomy" id="9649"/>
</organismHost>
<organismHost>
    <name type="scientific">Canis lupus familiaris</name>
    <name type="common">Dog</name>
    <name type="synonym">Canis familiaris</name>
    <dbReference type="NCBI Taxonomy" id="9615"/>
</organismHost>
<organismHost>
    <name type="scientific">Mustela</name>
    <dbReference type="NCBI Taxonomy" id="9665"/>
</organismHost>
<organismHost>
    <name type="scientific">Panthera leo</name>
    <name type="common">Lion</name>
    <dbReference type="NCBI Taxonomy" id="9689"/>
</organismHost>
<organismHost>
    <name type="scientific">Procyon lotor</name>
    <name type="common">Raccoon</name>
    <dbReference type="NCBI Taxonomy" id="9654"/>
</organismHost>
<organismHost>
    <name type="scientific">Zalophus californianus</name>
    <name type="common">California sealion</name>
    <dbReference type="NCBI Taxonomy" id="9704"/>
</organismHost>
<gene>
    <name type="primary">P/V/C</name>
</gene>
<sequence length="174" mass="20264">MSAKGWNASKPSERILLTLRRFKRSAASETKPATQAKRMEPQACRKRRTLRISMNHTSQQKDQTMSAMYLKIIRDVENAILRLWRRSGPLERTSNQDLEYDVIMFMITAVKRLRESKMLTVSWYLQALSVIEDSREEKEALMIALRILAKIIPKEMLHLTGDILSALNRTEQLM</sequence>
<feature type="chain" id="PRO_0000142792" description="Protein C">
    <location>
        <begin position="1"/>
        <end position="174"/>
    </location>
</feature>
<dbReference type="EMBL" id="M32418">
    <property type="protein sequence ID" value="AAA42881.1"/>
    <property type="molecule type" value="Genomic_RNA"/>
</dbReference>
<dbReference type="EMBL" id="X51869">
    <property type="protein sequence ID" value="CAA36159.1"/>
    <property type="molecule type" value="Genomic_RNA"/>
</dbReference>
<dbReference type="PIR" id="A23778">
    <property type="entry name" value="MNNZCV"/>
</dbReference>
<dbReference type="RefSeq" id="NP_047203.1">
    <property type="nucleotide sequence ID" value="NC_001921.1"/>
</dbReference>
<dbReference type="KEGG" id="vg:1489796"/>
<dbReference type="InterPro" id="IPR003875">
    <property type="entry name" value="Paramyxovir_NSC"/>
</dbReference>
<dbReference type="Pfam" id="PF02725">
    <property type="entry name" value="Paramyxo_NS_C"/>
    <property type="match status" value="1"/>
</dbReference>
<proteinExistence type="inferred from homology"/>